<dbReference type="EC" id="7.2.1.1" evidence="1"/>
<dbReference type="EMBL" id="CP000680">
    <property type="protein sequence ID" value="ABP84363.1"/>
    <property type="molecule type" value="Genomic_DNA"/>
</dbReference>
<dbReference type="SMR" id="A4XSP7"/>
<dbReference type="STRING" id="399739.Pmen_1599"/>
<dbReference type="KEGG" id="pmy:Pmen_1599"/>
<dbReference type="PATRIC" id="fig|399739.8.peg.1621"/>
<dbReference type="eggNOG" id="COG2209">
    <property type="taxonomic scope" value="Bacteria"/>
</dbReference>
<dbReference type="HOGENOM" id="CLU_095255_0_0_6"/>
<dbReference type="OrthoDB" id="9803631at2"/>
<dbReference type="GO" id="GO:0009276">
    <property type="term" value="C:Gram-negative-bacterium-type cell wall"/>
    <property type="evidence" value="ECO:0007669"/>
    <property type="project" value="InterPro"/>
</dbReference>
<dbReference type="GO" id="GO:0005886">
    <property type="term" value="C:plasma membrane"/>
    <property type="evidence" value="ECO:0007669"/>
    <property type="project" value="UniProtKB-SubCell"/>
</dbReference>
<dbReference type="GO" id="GO:0016655">
    <property type="term" value="F:oxidoreductase activity, acting on NAD(P)H, quinone or similar compound as acceptor"/>
    <property type="evidence" value="ECO:0007669"/>
    <property type="project" value="UniProtKB-UniRule"/>
</dbReference>
<dbReference type="GO" id="GO:0022904">
    <property type="term" value="P:respiratory electron transport chain"/>
    <property type="evidence" value="ECO:0007669"/>
    <property type="project" value="InterPro"/>
</dbReference>
<dbReference type="GO" id="GO:0006814">
    <property type="term" value="P:sodium ion transport"/>
    <property type="evidence" value="ECO:0007669"/>
    <property type="project" value="UniProtKB-UniRule"/>
</dbReference>
<dbReference type="HAMAP" id="MF_00429">
    <property type="entry name" value="NqrE"/>
    <property type="match status" value="1"/>
</dbReference>
<dbReference type="InterPro" id="IPR003667">
    <property type="entry name" value="NqrDE/RnfAE"/>
</dbReference>
<dbReference type="InterPro" id="IPR050133">
    <property type="entry name" value="NqrDE/RnfAE_oxidrdctase"/>
</dbReference>
<dbReference type="InterPro" id="IPR010967">
    <property type="entry name" value="NqrE"/>
</dbReference>
<dbReference type="NCBIfam" id="TIGR01940">
    <property type="entry name" value="nqrE"/>
    <property type="match status" value="1"/>
</dbReference>
<dbReference type="PANTHER" id="PTHR30335">
    <property type="entry name" value="INTEGRAL MEMBRANE PROTEIN OF SOXR-REDUCING COMPLEX"/>
    <property type="match status" value="1"/>
</dbReference>
<dbReference type="PANTHER" id="PTHR30335:SF1">
    <property type="entry name" value="NA(+)-TRANSLOCATING NADH-QUINONE REDUCTASE SUBUNIT E"/>
    <property type="match status" value="1"/>
</dbReference>
<dbReference type="Pfam" id="PF02508">
    <property type="entry name" value="Rnf-Nqr"/>
    <property type="match status" value="1"/>
</dbReference>
<dbReference type="PIRSF" id="PIRSF006102">
    <property type="entry name" value="NQR_DE"/>
    <property type="match status" value="1"/>
</dbReference>
<name>NQRE_ECTM1</name>
<evidence type="ECO:0000255" key="1">
    <source>
        <dbReference type="HAMAP-Rule" id="MF_00429"/>
    </source>
</evidence>
<comment type="function">
    <text evidence="1">NQR complex catalyzes the reduction of ubiquinone-1 to ubiquinol by two successive reactions, coupled with the transport of Na(+) ions from the cytoplasm to the periplasm. NqrA to NqrE are probably involved in the second step, the conversion of ubisemiquinone to ubiquinol.</text>
</comment>
<comment type="catalytic activity">
    <reaction evidence="1">
        <text>a ubiquinone + n Na(+)(in) + NADH + H(+) = a ubiquinol + n Na(+)(out) + NAD(+)</text>
        <dbReference type="Rhea" id="RHEA:47748"/>
        <dbReference type="Rhea" id="RHEA-COMP:9565"/>
        <dbReference type="Rhea" id="RHEA-COMP:9566"/>
        <dbReference type="ChEBI" id="CHEBI:15378"/>
        <dbReference type="ChEBI" id="CHEBI:16389"/>
        <dbReference type="ChEBI" id="CHEBI:17976"/>
        <dbReference type="ChEBI" id="CHEBI:29101"/>
        <dbReference type="ChEBI" id="CHEBI:57540"/>
        <dbReference type="ChEBI" id="CHEBI:57945"/>
        <dbReference type="EC" id="7.2.1.1"/>
    </reaction>
</comment>
<comment type="subunit">
    <text evidence="1">Composed of six subunits; NqrA, NqrB, NqrC, NqrD, NqrE and NqrF.</text>
</comment>
<comment type="subcellular location">
    <subcellularLocation>
        <location evidence="1">Cell inner membrane</location>
        <topology evidence="1">Multi-pass membrane protein</topology>
    </subcellularLocation>
</comment>
<comment type="similarity">
    <text evidence="1">Belongs to the NqrDE/RnfAE family.</text>
</comment>
<feature type="chain" id="PRO_1000060210" description="Na(+)-translocating NADH-quinone reductase subunit E">
    <location>
        <begin position="1"/>
        <end position="202"/>
    </location>
</feature>
<feature type="transmembrane region" description="Helical" evidence="1">
    <location>
        <begin position="11"/>
        <end position="31"/>
    </location>
</feature>
<feature type="transmembrane region" description="Helical" evidence="1">
    <location>
        <begin position="35"/>
        <end position="55"/>
    </location>
</feature>
<feature type="transmembrane region" description="Helical" evidence="1">
    <location>
        <begin position="79"/>
        <end position="99"/>
    </location>
</feature>
<feature type="transmembrane region" description="Helical" evidence="1">
    <location>
        <begin position="114"/>
        <end position="134"/>
    </location>
</feature>
<feature type="transmembrane region" description="Helical" evidence="1">
    <location>
        <begin position="144"/>
        <end position="164"/>
    </location>
</feature>
<feature type="transmembrane region" description="Helical" evidence="1">
    <location>
        <begin position="180"/>
        <end position="200"/>
    </location>
</feature>
<gene>
    <name evidence="1" type="primary">nqrE</name>
    <name type="ordered locus">Pmen_1599</name>
</gene>
<reference key="1">
    <citation type="submission" date="2007-04" db="EMBL/GenBank/DDBJ databases">
        <title>Complete sequence of Pseudomonas mendocina ymp.</title>
        <authorList>
            <consortium name="US DOE Joint Genome Institute"/>
            <person name="Copeland A."/>
            <person name="Lucas S."/>
            <person name="Lapidus A."/>
            <person name="Barry K."/>
            <person name="Glavina del Rio T."/>
            <person name="Dalin E."/>
            <person name="Tice H."/>
            <person name="Pitluck S."/>
            <person name="Kiss H."/>
            <person name="Brettin T."/>
            <person name="Detter J.C."/>
            <person name="Bruce D."/>
            <person name="Han C."/>
            <person name="Schmutz J."/>
            <person name="Larimer F."/>
            <person name="Land M."/>
            <person name="Hauser L."/>
            <person name="Kyrpides N."/>
            <person name="Mikhailova N."/>
            <person name="Hersman L."/>
            <person name="Dubois J."/>
            <person name="Maurice P."/>
            <person name="Richardson P."/>
        </authorList>
    </citation>
    <scope>NUCLEOTIDE SEQUENCE [LARGE SCALE GENOMIC DNA]</scope>
    <source>
        <strain>ymp</strain>
    </source>
</reference>
<sequence>MEHYISLFVRAVFVENMALAFFLGMCTFIAISKKVETAIGLGVAVIVVLGITMPVNNLIYANILKDGALAWAGLPEVDLSFLGLLTFIGVIAALVQILEMTLDKYVPSLYNALGVFLPLITVNCAIMGGSLFMVERDYNLAESTVYGIGAGVSWALAIAALAGIREKLKYSDVPAGLQGLGITFITIGLMSLGFMSFSGVQL</sequence>
<accession>A4XSP7</accession>
<protein>
    <recommendedName>
        <fullName evidence="1">Na(+)-translocating NADH-quinone reductase subunit E</fullName>
        <shortName evidence="1">Na(+)-NQR subunit E</shortName>
        <shortName evidence="1">Na(+)-translocating NQR subunit E</shortName>
        <ecNumber evidence="1">7.2.1.1</ecNumber>
    </recommendedName>
    <alternativeName>
        <fullName evidence="1">NQR complex subunit E</fullName>
    </alternativeName>
    <alternativeName>
        <fullName evidence="1">NQR-1 subunit E</fullName>
    </alternativeName>
</protein>
<proteinExistence type="inferred from homology"/>
<organism>
    <name type="scientific">Ectopseudomonas mendocina (strain ymp)</name>
    <name type="common">Pseudomonas mendocina</name>
    <dbReference type="NCBI Taxonomy" id="399739"/>
    <lineage>
        <taxon>Bacteria</taxon>
        <taxon>Pseudomonadati</taxon>
        <taxon>Pseudomonadota</taxon>
        <taxon>Gammaproteobacteria</taxon>
        <taxon>Pseudomonadales</taxon>
        <taxon>Pseudomonadaceae</taxon>
        <taxon>Ectopseudomonas</taxon>
    </lineage>
</organism>
<keyword id="KW-0997">Cell inner membrane</keyword>
<keyword id="KW-1003">Cell membrane</keyword>
<keyword id="KW-0406">Ion transport</keyword>
<keyword id="KW-0472">Membrane</keyword>
<keyword id="KW-0520">NAD</keyword>
<keyword id="KW-0915">Sodium</keyword>
<keyword id="KW-0739">Sodium transport</keyword>
<keyword id="KW-1278">Translocase</keyword>
<keyword id="KW-0812">Transmembrane</keyword>
<keyword id="KW-1133">Transmembrane helix</keyword>
<keyword id="KW-0813">Transport</keyword>
<keyword id="KW-0830">Ubiquinone</keyword>